<keyword id="KW-0547">Nucleotide-binding</keyword>
<proteinExistence type="inferred from homology"/>
<feature type="chain" id="PRO_1000212335" description="Nucleotide-binding protein GM21_0633">
    <location>
        <begin position="1"/>
        <end position="161"/>
    </location>
</feature>
<accession>C6E091</accession>
<dbReference type="EMBL" id="CP001661">
    <property type="protein sequence ID" value="ACT16707.1"/>
    <property type="molecule type" value="Genomic_DNA"/>
</dbReference>
<dbReference type="SMR" id="C6E091"/>
<dbReference type="STRING" id="443144.GM21_0633"/>
<dbReference type="KEGG" id="gem:GM21_0633"/>
<dbReference type="eggNOG" id="COG1666">
    <property type="taxonomic scope" value="Bacteria"/>
</dbReference>
<dbReference type="HOGENOM" id="CLU_099839_1_0_7"/>
<dbReference type="OrthoDB" id="9801447at2"/>
<dbReference type="GO" id="GO:0005829">
    <property type="term" value="C:cytosol"/>
    <property type="evidence" value="ECO:0007669"/>
    <property type="project" value="TreeGrafter"/>
</dbReference>
<dbReference type="GO" id="GO:0000166">
    <property type="term" value="F:nucleotide binding"/>
    <property type="evidence" value="ECO:0007669"/>
    <property type="project" value="TreeGrafter"/>
</dbReference>
<dbReference type="CDD" id="cd11740">
    <property type="entry name" value="YajQ_like"/>
    <property type="match status" value="1"/>
</dbReference>
<dbReference type="FunFam" id="3.30.70.990:FF:000002">
    <property type="entry name" value="UPF0234 protein LEP1GSC067_4943"/>
    <property type="match status" value="1"/>
</dbReference>
<dbReference type="Gene3D" id="3.30.70.860">
    <property type="match status" value="1"/>
</dbReference>
<dbReference type="Gene3D" id="3.30.70.990">
    <property type="entry name" value="YajQ-like, domain 2"/>
    <property type="match status" value="1"/>
</dbReference>
<dbReference type="HAMAP" id="MF_00632">
    <property type="entry name" value="YajQ"/>
    <property type="match status" value="1"/>
</dbReference>
<dbReference type="InterPro" id="IPR007551">
    <property type="entry name" value="DUF520"/>
</dbReference>
<dbReference type="InterPro" id="IPR035571">
    <property type="entry name" value="UPF0234-like_C"/>
</dbReference>
<dbReference type="InterPro" id="IPR035570">
    <property type="entry name" value="UPF0234_N"/>
</dbReference>
<dbReference type="InterPro" id="IPR036183">
    <property type="entry name" value="YajQ-like_sf"/>
</dbReference>
<dbReference type="NCBIfam" id="NF003819">
    <property type="entry name" value="PRK05412.1"/>
    <property type="match status" value="1"/>
</dbReference>
<dbReference type="PANTHER" id="PTHR30476">
    <property type="entry name" value="UPF0234 PROTEIN YAJQ"/>
    <property type="match status" value="1"/>
</dbReference>
<dbReference type="PANTHER" id="PTHR30476:SF0">
    <property type="entry name" value="UPF0234 PROTEIN YAJQ"/>
    <property type="match status" value="1"/>
</dbReference>
<dbReference type="Pfam" id="PF04461">
    <property type="entry name" value="DUF520"/>
    <property type="match status" value="1"/>
</dbReference>
<dbReference type="SUPFAM" id="SSF89963">
    <property type="entry name" value="YajQ-like"/>
    <property type="match status" value="2"/>
</dbReference>
<protein>
    <recommendedName>
        <fullName evidence="1">Nucleotide-binding protein GM21_0633</fullName>
    </recommendedName>
</protein>
<evidence type="ECO:0000255" key="1">
    <source>
        <dbReference type="HAMAP-Rule" id="MF_00632"/>
    </source>
</evidence>
<sequence>MPSFDIVSKVDMQEVDNAINQTVKEIAQRYDFKGSKCEVTLEKESIKVLADDDFKLKAVIDILQSKFVKRNISPKSLQYGKAEQASGSMVRQIITLQVGISKEKAKEIGQVIKETKLKVQSQIQDDQLRVTGKNIDDLQEVIRVLKGKDLDIDMQFVNFRS</sequence>
<reference key="1">
    <citation type="submission" date="2009-07" db="EMBL/GenBank/DDBJ databases">
        <title>Complete sequence of Geobacter sp. M21.</title>
        <authorList>
            <consortium name="US DOE Joint Genome Institute"/>
            <person name="Lucas S."/>
            <person name="Copeland A."/>
            <person name="Lapidus A."/>
            <person name="Glavina del Rio T."/>
            <person name="Dalin E."/>
            <person name="Tice H."/>
            <person name="Bruce D."/>
            <person name="Goodwin L."/>
            <person name="Pitluck S."/>
            <person name="Saunders E."/>
            <person name="Brettin T."/>
            <person name="Detter J.C."/>
            <person name="Han C."/>
            <person name="Larimer F."/>
            <person name="Land M."/>
            <person name="Hauser L."/>
            <person name="Kyrpides N."/>
            <person name="Ovchinnikova G."/>
            <person name="Lovley D."/>
        </authorList>
    </citation>
    <scope>NUCLEOTIDE SEQUENCE [LARGE SCALE GENOMIC DNA]</scope>
    <source>
        <strain>M21</strain>
    </source>
</reference>
<name>Y633_GEOSM</name>
<organism>
    <name type="scientific">Geobacter sp. (strain M21)</name>
    <dbReference type="NCBI Taxonomy" id="443144"/>
    <lineage>
        <taxon>Bacteria</taxon>
        <taxon>Pseudomonadati</taxon>
        <taxon>Thermodesulfobacteriota</taxon>
        <taxon>Desulfuromonadia</taxon>
        <taxon>Geobacterales</taxon>
        <taxon>Geobacteraceae</taxon>
        <taxon>Geobacter</taxon>
    </lineage>
</organism>
<comment type="function">
    <text evidence="1">Nucleotide-binding protein.</text>
</comment>
<comment type="similarity">
    <text evidence="1">Belongs to the YajQ family.</text>
</comment>
<gene>
    <name type="ordered locus">GM21_0633</name>
</gene>